<reference key="1">
    <citation type="journal article" date="2008" name="PLoS ONE">
        <title>Environmental adaptation: genomic analysis of the piezotolerant and psychrotolerant deep-sea iron reducing bacterium Shewanella piezotolerans WP3.</title>
        <authorList>
            <person name="Wang F."/>
            <person name="Wang J."/>
            <person name="Jian H."/>
            <person name="Zhang B."/>
            <person name="Li S."/>
            <person name="Wang F."/>
            <person name="Zeng X."/>
            <person name="Gao L."/>
            <person name="Bartlett D.H."/>
            <person name="Yu J."/>
            <person name="Hu S."/>
            <person name="Xiao X."/>
        </authorList>
    </citation>
    <scope>NUCLEOTIDE SEQUENCE [LARGE SCALE GENOMIC DNA]</scope>
    <source>
        <strain>WP3 / JCM 13877</strain>
    </source>
</reference>
<gene>
    <name evidence="1" type="primary">tpiA</name>
    <name type="ordered locus">swp_1214</name>
</gene>
<dbReference type="EC" id="5.3.1.1" evidence="1"/>
<dbReference type="EMBL" id="CP000472">
    <property type="protein sequence ID" value="ACJ28008.1"/>
    <property type="molecule type" value="Genomic_DNA"/>
</dbReference>
<dbReference type="RefSeq" id="WP_020911386.1">
    <property type="nucleotide sequence ID" value="NC_011566.1"/>
</dbReference>
<dbReference type="SMR" id="B8CKG9"/>
<dbReference type="STRING" id="225849.swp_1214"/>
<dbReference type="KEGG" id="swp:swp_1214"/>
<dbReference type="eggNOG" id="COG0149">
    <property type="taxonomic scope" value="Bacteria"/>
</dbReference>
<dbReference type="HOGENOM" id="CLU_024251_2_1_6"/>
<dbReference type="OrthoDB" id="9809429at2"/>
<dbReference type="UniPathway" id="UPA00109">
    <property type="reaction ID" value="UER00189"/>
</dbReference>
<dbReference type="UniPathway" id="UPA00138"/>
<dbReference type="Proteomes" id="UP000000753">
    <property type="component" value="Chromosome"/>
</dbReference>
<dbReference type="GO" id="GO:0005829">
    <property type="term" value="C:cytosol"/>
    <property type="evidence" value="ECO:0007669"/>
    <property type="project" value="TreeGrafter"/>
</dbReference>
<dbReference type="GO" id="GO:0004807">
    <property type="term" value="F:triose-phosphate isomerase activity"/>
    <property type="evidence" value="ECO:0007669"/>
    <property type="project" value="UniProtKB-UniRule"/>
</dbReference>
<dbReference type="GO" id="GO:0006094">
    <property type="term" value="P:gluconeogenesis"/>
    <property type="evidence" value="ECO:0007669"/>
    <property type="project" value="UniProtKB-UniRule"/>
</dbReference>
<dbReference type="GO" id="GO:0046166">
    <property type="term" value="P:glyceraldehyde-3-phosphate biosynthetic process"/>
    <property type="evidence" value="ECO:0007669"/>
    <property type="project" value="TreeGrafter"/>
</dbReference>
<dbReference type="GO" id="GO:0019563">
    <property type="term" value="P:glycerol catabolic process"/>
    <property type="evidence" value="ECO:0007669"/>
    <property type="project" value="TreeGrafter"/>
</dbReference>
<dbReference type="GO" id="GO:0006096">
    <property type="term" value="P:glycolytic process"/>
    <property type="evidence" value="ECO:0007669"/>
    <property type="project" value="UniProtKB-UniRule"/>
</dbReference>
<dbReference type="CDD" id="cd00311">
    <property type="entry name" value="TIM"/>
    <property type="match status" value="1"/>
</dbReference>
<dbReference type="FunFam" id="3.20.20.70:FF:000016">
    <property type="entry name" value="Triosephosphate isomerase"/>
    <property type="match status" value="1"/>
</dbReference>
<dbReference type="Gene3D" id="3.20.20.70">
    <property type="entry name" value="Aldolase class I"/>
    <property type="match status" value="1"/>
</dbReference>
<dbReference type="HAMAP" id="MF_00147_B">
    <property type="entry name" value="TIM_B"/>
    <property type="match status" value="1"/>
</dbReference>
<dbReference type="InterPro" id="IPR013785">
    <property type="entry name" value="Aldolase_TIM"/>
</dbReference>
<dbReference type="InterPro" id="IPR035990">
    <property type="entry name" value="TIM_sf"/>
</dbReference>
<dbReference type="InterPro" id="IPR022896">
    <property type="entry name" value="TrioseP_Isoase_bac/euk"/>
</dbReference>
<dbReference type="InterPro" id="IPR000652">
    <property type="entry name" value="Triosephosphate_isomerase"/>
</dbReference>
<dbReference type="InterPro" id="IPR020861">
    <property type="entry name" value="Triosephosphate_isomerase_AS"/>
</dbReference>
<dbReference type="NCBIfam" id="TIGR00419">
    <property type="entry name" value="tim"/>
    <property type="match status" value="1"/>
</dbReference>
<dbReference type="PANTHER" id="PTHR21139">
    <property type="entry name" value="TRIOSEPHOSPHATE ISOMERASE"/>
    <property type="match status" value="1"/>
</dbReference>
<dbReference type="PANTHER" id="PTHR21139:SF42">
    <property type="entry name" value="TRIOSEPHOSPHATE ISOMERASE"/>
    <property type="match status" value="1"/>
</dbReference>
<dbReference type="Pfam" id="PF00121">
    <property type="entry name" value="TIM"/>
    <property type="match status" value="1"/>
</dbReference>
<dbReference type="SUPFAM" id="SSF51351">
    <property type="entry name" value="Triosephosphate isomerase (TIM)"/>
    <property type="match status" value="1"/>
</dbReference>
<dbReference type="PROSITE" id="PS00171">
    <property type="entry name" value="TIM_1"/>
    <property type="match status" value="1"/>
</dbReference>
<dbReference type="PROSITE" id="PS51440">
    <property type="entry name" value="TIM_2"/>
    <property type="match status" value="1"/>
</dbReference>
<proteinExistence type="inferred from homology"/>
<accession>B8CKG9</accession>
<organism>
    <name type="scientific">Shewanella piezotolerans (strain WP3 / JCM 13877)</name>
    <dbReference type="NCBI Taxonomy" id="225849"/>
    <lineage>
        <taxon>Bacteria</taxon>
        <taxon>Pseudomonadati</taxon>
        <taxon>Pseudomonadota</taxon>
        <taxon>Gammaproteobacteria</taxon>
        <taxon>Alteromonadales</taxon>
        <taxon>Shewanellaceae</taxon>
        <taxon>Shewanella</taxon>
    </lineage>
</organism>
<name>TPIS_SHEPW</name>
<sequence length="260" mass="28217">MALRRPMVAGNWKMNGSAQLAQELFKKFATKLQNDSAEVVLCPPSIYLESVRQLLDENKEALNGCLVRMGTQNVSQHDFGAYTGEISGQMLKDSGCRYVIIGHSERRRMYGETSDIVAEKFAAAQKHGLTPILCVGESGPAREARRTFEVIAEELDVVIEKNGTMAFDNAIIAYEPLWAVGTGKSATPEQAQEVHAFIRKRLSEVSPFIGENIRILYGGSVTPSNAADLFAQPDVDGGLIGGVSLNATEFLSLCTIAMSA</sequence>
<protein>
    <recommendedName>
        <fullName evidence="1">Triosephosphate isomerase</fullName>
        <shortName evidence="1">TIM</shortName>
        <shortName evidence="1">TPI</shortName>
        <ecNumber evidence="1">5.3.1.1</ecNumber>
    </recommendedName>
    <alternativeName>
        <fullName evidence="1">Triose-phosphate isomerase</fullName>
    </alternativeName>
</protein>
<evidence type="ECO:0000255" key="1">
    <source>
        <dbReference type="HAMAP-Rule" id="MF_00147"/>
    </source>
</evidence>
<feature type="chain" id="PRO_1000196988" description="Triosephosphate isomerase">
    <location>
        <begin position="1"/>
        <end position="260"/>
    </location>
</feature>
<feature type="active site" description="Electrophile" evidence="1">
    <location>
        <position position="103"/>
    </location>
</feature>
<feature type="active site" description="Proton acceptor" evidence="1">
    <location>
        <position position="175"/>
    </location>
</feature>
<feature type="binding site" evidence="1">
    <location>
        <begin position="11"/>
        <end position="13"/>
    </location>
    <ligand>
        <name>substrate</name>
    </ligand>
</feature>
<feature type="binding site" evidence="1">
    <location>
        <position position="181"/>
    </location>
    <ligand>
        <name>substrate</name>
    </ligand>
</feature>
<feature type="binding site" evidence="1">
    <location>
        <position position="220"/>
    </location>
    <ligand>
        <name>substrate</name>
    </ligand>
</feature>
<feature type="binding site" evidence="1">
    <location>
        <begin position="241"/>
        <end position="242"/>
    </location>
    <ligand>
        <name>substrate</name>
    </ligand>
</feature>
<comment type="function">
    <text evidence="1">Involved in the gluconeogenesis. Catalyzes stereospecifically the conversion of dihydroxyacetone phosphate (DHAP) to D-glyceraldehyde-3-phosphate (G3P).</text>
</comment>
<comment type="catalytic activity">
    <reaction evidence="1">
        <text>D-glyceraldehyde 3-phosphate = dihydroxyacetone phosphate</text>
        <dbReference type="Rhea" id="RHEA:18585"/>
        <dbReference type="ChEBI" id="CHEBI:57642"/>
        <dbReference type="ChEBI" id="CHEBI:59776"/>
        <dbReference type="EC" id="5.3.1.1"/>
    </reaction>
</comment>
<comment type="pathway">
    <text evidence="1">Carbohydrate biosynthesis; gluconeogenesis.</text>
</comment>
<comment type="pathway">
    <text evidence="1">Carbohydrate degradation; glycolysis; D-glyceraldehyde 3-phosphate from glycerone phosphate: step 1/1.</text>
</comment>
<comment type="subunit">
    <text evidence="1">Homodimer.</text>
</comment>
<comment type="subcellular location">
    <subcellularLocation>
        <location evidence="1">Cytoplasm</location>
    </subcellularLocation>
</comment>
<comment type="similarity">
    <text evidence="1">Belongs to the triosephosphate isomerase family.</text>
</comment>
<keyword id="KW-0963">Cytoplasm</keyword>
<keyword id="KW-0312">Gluconeogenesis</keyword>
<keyword id="KW-0324">Glycolysis</keyword>
<keyword id="KW-0413">Isomerase</keyword>